<comment type="function">
    <text evidence="3 6 7 8 10 11 12">Non-essential component of the volume-regulated anion channel (VRAC, also named VSOAC channel), an anion channel required to maintain a constant cell volume in response to extracellular or intracellular osmotic changes (PubMed:29769723, PubMed:36522427, PubMed:36928458). The VRAC channel conducts iodide better than chloride and can also conduct organic osmolytes like taurine (By similarity). Plays a redundant role in the efflux of amino acids, such as aspartate and glutamate, in response to osmotic stress (By similarity). The VRAC channel also mediates transport of immunoreactive cyclic dinucleotide GMP-AMP (2'-3'-cGAMP), an immune messenger produced in response to DNA virus in the cytosol (By similarity). Channel activity requires LRRC8A plus at least one other family member (LRRC8B, LRRC8C, LRRC8D or LRRC8E); channel characteristics depend on the precise subunit composition (PubMed:36522427, PubMed:36928458). May play a role in adipogenesis (PubMed:15184384, PubMed:15564382, PubMed:21804215).</text>
</comment>
<comment type="catalytic activity">
    <reaction evidence="11 12">
        <text>chloride(in) = chloride(out)</text>
        <dbReference type="Rhea" id="RHEA:29823"/>
        <dbReference type="ChEBI" id="CHEBI:17996"/>
    </reaction>
</comment>
<comment type="catalytic activity">
    <reaction evidence="3">
        <text>iodide(out) = iodide(in)</text>
        <dbReference type="Rhea" id="RHEA:66324"/>
        <dbReference type="ChEBI" id="CHEBI:16382"/>
    </reaction>
</comment>
<comment type="catalytic activity">
    <reaction evidence="3">
        <text>taurine(out) = taurine(in)</text>
        <dbReference type="Rhea" id="RHEA:66328"/>
        <dbReference type="ChEBI" id="CHEBI:507393"/>
    </reaction>
</comment>
<comment type="catalytic activity">
    <reaction evidence="3">
        <text>2',3'-cGAMP(out) = 2',3'-cGAMP(in)</text>
        <dbReference type="Rhea" id="RHEA:66320"/>
        <dbReference type="ChEBI" id="CHEBI:143093"/>
    </reaction>
    <physiologicalReaction direction="left-to-right" evidence="3">
        <dbReference type="Rhea" id="RHEA:66321"/>
    </physiologicalReaction>
    <physiologicalReaction direction="right-to-left" evidence="3">
        <dbReference type="Rhea" id="RHEA:66322"/>
    </physiologicalReaction>
</comment>
<comment type="subunit">
    <text evidence="9 10 11 12">Heterohexamer; oligomerizes with other LRRC8 proteins (LRRC8A, LRRC8B, LRRC8D and/or LRRC8E) to form a heterohexamer (PubMed:24782309, PubMed:29769723, PubMed:36522427, PubMed:36928458). Homoheptamer; inactive, likely because it is not targeted to the plasma membrane in the absence of LRRC8A (PubMed:36522427). In vivo, the subunit composition may depend primarily on expression levels, and heterooligomeric channels containing various proportions of the different LRRC8 proteins may coexist (PubMed:36522427).</text>
</comment>
<comment type="subcellular location">
    <subcellularLocation>
        <location evidence="10">Cell membrane</location>
        <topology evidence="3">Multi-pass membrane protein</topology>
    </subcellularLocation>
    <subcellularLocation>
        <location evidence="3">Endoplasmic reticulum membrane</location>
    </subcellularLocation>
    <text evidence="3">In the absence of LRRC8A, resides primarily in a cytoplasmic compartment, probably the endoplasmic reticulum. Requires LRRC8A for expression at the cell membrane.</text>
</comment>
<comment type="tissue specificity">
    <text evidence="6 7">Expressed at very low levels in adipose tissue.</text>
</comment>
<comment type="induction">
    <text evidence="6">Induced during the earliest stages of adipogenesis.</text>
</comment>
<comment type="domain">
    <text evidence="2">The volume-regulated anion channel (VRAC) channel forms a trimer of dimers, with symmetry mismatch between the pore-forming domain and the cytosolic LRR repeats, a topology similar to gap junction proteins.</text>
</comment>
<comment type="domain">
    <text evidence="3">The cytoplasmic N-terminus preceding the first transmembrane (residues 1-22) regulates volume-regulated anion channel (VRAC) conductance, ion permeability and inactivation gating.</text>
</comment>
<comment type="disruption phenotype">
    <text evidence="8">Mice do not show remarkable changes in body weight or the weight of white adipose tissue on a chow diet, but display significantly lower body weights and fat mass than wild-type mice when fed a high-fat diet. Moreover, improved insulin resistance induced by the high-fat diet is observed.</text>
</comment>
<comment type="similarity">
    <text evidence="19">Belongs to the LRRC8 family.</text>
</comment>
<sequence>MIPVTEFRQFSEQQPAFRVLKPWWDVFTDYLSVAMLMIGVFGCTLQVMQDKIICLPKRVQPAQNHSSVPNVSQAVISTTPLPPPKPSPTNPATVEMKGLKTDLDLQQYSFINQMCYERALHWYAKYFPYLVLIHTLVFMLCSNFWFKFPGSSSKIEHFISILGKCFDSPWTTRALSEVSGEDSEEKDNRKNNMNRSGTIQSGPEGNLVRSQSLKSIPEKFVVDKSAAGALDKKEGEQAKALFEKVKKFRLHVEEGDILYAMYVRQTVLKVIKFLIIIAYNSALVSKVQFTVDCNVDIQDMTGYKNFSCNHTMAHLFSKLSFCYLCFVSIYGLTCLYTLYWLFYRSLREYSFEYVRQETGIDDIPDVKNDFAFMLHMIDQYDPLYSKRFAVFLSEVSENKLKQLNLNNEWTPDKLRQKLQTNAHNRLELPLIMLSGLPDTVFEITELQSLKLEIIKNVMIPATIAQLDNLQELCLHQCSVKIHSAALSFLKENLKVLSVKFDDMRELPPWMYGLRNLEELYLVGSLSHDISKNVTLESLRDLKSLKILSIKSNVSKIPQAVVDVSSHLQKMCVHNDGTKLVMLNNLKKMTNLTELELVHCDLERIPHAVFSLLSLQELDLKENNLKSIEEIVSFQHLRKLTVLKLWYNSIAYIPEHIKKLTSLERLFFSHNKVEVLPSHLFLCNKIRYLDLSYNDIRFIPPEIGVLQSLQYFSITCNKVESLPDELYFCKKLKTLKIGKNSLSVLSPKIGNLLFLSYLDIKGNHFEVLPPELGDCRALKRAGLVVEDALFETLPSDVREQMKAD</sequence>
<proteinExistence type="evidence at protein level"/>
<protein>
    <recommendedName>
        <fullName evidence="17 18">Volume-regulated anion channel subunit LRRC8C</fullName>
    </recommendedName>
    <alternativeName>
        <fullName evidence="15">Factor for adipocyte differentiation 158</fullName>
    </alternativeName>
    <alternativeName>
        <fullName evidence="16">Leucine-rich repeat-containing protein 8C</fullName>
    </alternativeName>
</protein>
<gene>
    <name evidence="16 20" type="primary">Lrrc8c</name>
    <name evidence="14" type="synonym">Ad158</name>
    <name evidence="13" type="synonym">Fad158</name>
</gene>
<feature type="chain" id="PRO_0000076248" description="Volume-regulated anion channel subunit LRRC8C">
    <location>
        <begin position="1"/>
        <end position="803"/>
    </location>
</feature>
<feature type="topological domain" description="Cytoplasmic" evidence="11 12 21 28">
    <location>
        <begin position="1"/>
        <end position="22"/>
    </location>
</feature>
<feature type="transmembrane region" description="Helical; Name=1" evidence="11 12 21 28">
    <location>
        <begin position="23"/>
        <end position="48"/>
    </location>
</feature>
<feature type="topological domain" description="Extracellular" evidence="11 12 21 28">
    <location>
        <begin position="49"/>
        <end position="124"/>
    </location>
</feature>
<feature type="transmembrane region" description="Helical; Name=2" evidence="11 12 21 28">
    <location>
        <begin position="125"/>
        <end position="144"/>
    </location>
</feature>
<feature type="topological domain" description="Cytoplasmic" evidence="11 12 21 28">
    <location>
        <begin position="145"/>
        <end position="262"/>
    </location>
</feature>
<feature type="transmembrane region" description="Helical; Name=3" evidence="11 12 21 28">
    <location>
        <begin position="263"/>
        <end position="284"/>
    </location>
</feature>
<feature type="topological domain" description="Extracellular" evidence="11 12 21 28">
    <location>
        <begin position="285"/>
        <end position="314"/>
    </location>
</feature>
<feature type="transmembrane region" description="Helical; Name=4" evidence="11 12 21 28">
    <location>
        <begin position="315"/>
        <end position="339"/>
    </location>
</feature>
<feature type="topological domain" description="Cytoplasmic" evidence="11 12 21 28">
    <location>
        <begin position="340"/>
        <end position="803"/>
    </location>
</feature>
<feature type="repeat" description="LRR 1" evidence="4 11 12 21 28">
    <location>
        <begin position="409"/>
        <end position="420"/>
    </location>
</feature>
<feature type="repeat" description="LRR 2" evidence="4 11 12 21 28">
    <location>
        <begin position="421"/>
        <end position="443"/>
    </location>
</feature>
<feature type="repeat" description="LRR 3" evidence="4 11 12 21 28">
    <location>
        <begin position="446"/>
        <end position="466"/>
    </location>
</feature>
<feature type="repeat" description="LRR 4" evidence="4 11 12 21 28">
    <location>
        <begin position="467"/>
        <end position="488"/>
    </location>
</feature>
<feature type="repeat" description="LRR 5" evidence="4 11 12 21 28">
    <location>
        <begin position="490"/>
        <end position="513"/>
    </location>
</feature>
<feature type="repeat" description="LRR 6" evidence="4 11 12 21 28">
    <location>
        <begin position="515"/>
        <end position="537"/>
    </location>
</feature>
<feature type="repeat" description="LRR 7" evidence="4 11 12 21 28">
    <location>
        <begin position="541"/>
        <end position="563"/>
    </location>
</feature>
<feature type="repeat" description="LRR 8" evidence="4 11 12 21 28">
    <location>
        <begin position="566"/>
        <end position="586"/>
    </location>
</feature>
<feature type="repeat" description="LRR 9" evidence="4 11 12 21 28">
    <location>
        <begin position="588"/>
        <end position="611"/>
    </location>
</feature>
<feature type="repeat" description="LRR 10" evidence="4 11 12 21 28">
    <location>
        <begin position="613"/>
        <end position="635"/>
    </location>
</feature>
<feature type="repeat" description="LRR 11" evidence="4 11 12 21 28">
    <location>
        <begin position="637"/>
        <end position="659"/>
    </location>
</feature>
<feature type="repeat" description="LRR 12" evidence="4 11 12 21 28">
    <location>
        <begin position="660"/>
        <end position="682"/>
    </location>
</feature>
<feature type="repeat" description="LRR 13" evidence="4 11 12 21 28">
    <location>
        <begin position="684"/>
        <end position="705"/>
    </location>
</feature>
<feature type="repeat" description="LRR 14" evidence="4 11 12 21 28">
    <location>
        <begin position="706"/>
        <end position="728"/>
    </location>
</feature>
<feature type="repeat" description="LRR 15" evidence="4 11 12 21 28">
    <location>
        <begin position="730"/>
        <end position="751"/>
    </location>
</feature>
<feature type="repeat" description="LRR 16" evidence="4 11 12 21 28">
    <location>
        <begin position="752"/>
        <end position="774"/>
    </location>
</feature>
<feature type="repeat" description="LRR 17" evidence="4 11 12 21 28">
    <location>
        <begin position="776"/>
        <end position="799"/>
    </location>
</feature>
<feature type="region of interest" description="Disordered" evidence="5">
    <location>
        <begin position="177"/>
        <end position="206"/>
    </location>
</feature>
<feature type="compositionally biased region" description="Polar residues" evidence="5">
    <location>
        <begin position="191"/>
        <end position="206"/>
    </location>
</feature>
<feature type="modified residue" description="Phosphoserine" evidence="3">
    <location>
        <position position="212"/>
    </location>
</feature>
<feature type="modified residue" description="Phosphoserine" evidence="1">
    <location>
        <position position="215"/>
    </location>
</feature>
<feature type="disulfide bond" evidence="11 12 21 22 23 25 27 28 30 31 32 33 35 36 37">
    <location>
        <begin position="54"/>
        <end position="308"/>
    </location>
</feature>
<feature type="disulfide bond" evidence="11 12 21 22 23 25 27 28 30 31 32 33 35 36 37">
    <location>
        <begin position="115"/>
        <end position="293"/>
    </location>
</feature>
<feature type="mutagenesis site" description="No effect on channel activity of the complex with LRRC8A." evidence="10">
    <original>L</original>
    <variation>R</variation>
    <location>
        <position position="105"/>
    </location>
</feature>
<feature type="sequence conflict" description="In Ref. 2; BAC40706." evidence="19" ref="2">
    <original>V</original>
    <variation>A</variation>
    <location>
        <position position="178"/>
    </location>
</feature>
<feature type="sequence conflict" description="In Ref. 2; BAE41199." evidence="19" ref="2">
    <original>P</original>
    <variation>A</variation>
    <location>
        <position position="653"/>
    </location>
</feature>
<feature type="sequence conflict" description="In Ref. 3; AAH25473/AAH26572." evidence="19" ref="3">
    <original>G</original>
    <variation>R</variation>
    <location>
        <position position="781"/>
    </location>
</feature>
<feature type="helix" evidence="39">
    <location>
        <begin position="17"/>
        <end position="20"/>
    </location>
</feature>
<feature type="helix" evidence="39">
    <location>
        <begin position="23"/>
        <end position="47"/>
    </location>
</feature>
<feature type="strand" evidence="39">
    <location>
        <begin position="52"/>
        <end position="58"/>
    </location>
</feature>
<feature type="helix" evidence="39">
    <location>
        <begin position="105"/>
        <end position="118"/>
    </location>
</feature>
<feature type="helix" evidence="39">
    <location>
        <begin position="122"/>
        <end position="142"/>
    </location>
</feature>
<feature type="turn" evidence="39">
    <location>
        <begin position="144"/>
        <end position="146"/>
    </location>
</feature>
<feature type="helix" evidence="39">
    <location>
        <begin position="149"/>
        <end position="167"/>
    </location>
</feature>
<feature type="helix" evidence="39">
    <location>
        <begin position="169"/>
        <end position="178"/>
    </location>
</feature>
<feature type="helix" evidence="39">
    <location>
        <begin position="233"/>
        <end position="252"/>
    </location>
</feature>
<feature type="helix" evidence="39">
    <location>
        <begin position="257"/>
        <end position="283"/>
    </location>
</feature>
<feature type="helix" evidence="39">
    <location>
        <begin position="284"/>
        <end position="286"/>
    </location>
</feature>
<feature type="strand" evidence="39">
    <location>
        <begin position="289"/>
        <end position="293"/>
    </location>
</feature>
<feature type="turn" evidence="39">
    <location>
        <begin position="298"/>
        <end position="301"/>
    </location>
</feature>
<feature type="strand" evidence="39">
    <location>
        <begin position="306"/>
        <end position="310"/>
    </location>
</feature>
<feature type="helix" evidence="39">
    <location>
        <begin position="313"/>
        <end position="342"/>
    </location>
</feature>
<feature type="turn" evidence="39">
    <location>
        <begin position="343"/>
        <end position="347"/>
    </location>
</feature>
<feature type="helix" evidence="39">
    <location>
        <begin position="352"/>
        <end position="357"/>
    </location>
</feature>
<feature type="helix" evidence="39">
    <location>
        <begin position="369"/>
        <end position="380"/>
    </location>
</feature>
<feature type="helix" evidence="39">
    <location>
        <begin position="383"/>
        <end position="392"/>
    </location>
</feature>
<feature type="helix" evidence="39">
    <location>
        <begin position="395"/>
        <end position="407"/>
    </location>
</feature>
<feature type="helix" evidence="40">
    <location>
        <begin position="411"/>
        <end position="417"/>
    </location>
</feature>
<feature type="strand" evidence="40">
    <location>
        <begin position="426"/>
        <end position="432"/>
    </location>
</feature>
<feature type="helix" evidence="40">
    <location>
        <begin position="438"/>
        <end position="442"/>
    </location>
</feature>
<feature type="strand" evidence="40">
    <location>
        <begin position="448"/>
        <end position="453"/>
    </location>
</feature>
<feature type="strand" evidence="40">
    <location>
        <begin position="456"/>
        <end position="458"/>
    </location>
</feature>
<feature type="helix" evidence="40">
    <location>
        <begin position="461"/>
        <end position="465"/>
    </location>
</feature>
<feature type="strand" evidence="40">
    <location>
        <begin position="471"/>
        <end position="476"/>
    </location>
</feature>
<feature type="strand" evidence="38">
    <location>
        <begin position="479"/>
        <end position="481"/>
    </location>
</feature>
<feature type="helix" evidence="40">
    <location>
        <begin position="483"/>
        <end position="491"/>
    </location>
</feature>
<feature type="strand" evidence="40">
    <location>
        <begin position="495"/>
        <end position="502"/>
    </location>
</feature>
<feature type="turn" evidence="40">
    <location>
        <begin position="503"/>
        <end position="505"/>
    </location>
</feature>
<feature type="helix" evidence="40">
    <location>
        <begin position="510"/>
        <end position="512"/>
    </location>
</feature>
<feature type="strand" evidence="40">
    <location>
        <begin position="518"/>
        <end position="523"/>
    </location>
</feature>
<feature type="turn" evidence="38">
    <location>
        <begin position="527"/>
        <end position="529"/>
    </location>
</feature>
<feature type="helix" evidence="40">
    <location>
        <begin position="535"/>
        <end position="537"/>
    </location>
</feature>
<feature type="strand" evidence="40">
    <location>
        <begin position="546"/>
        <end position="549"/>
    </location>
</feature>
<feature type="helix" evidence="40">
    <location>
        <begin position="558"/>
        <end position="563"/>
    </location>
</feature>
<feature type="turn" evidence="40">
    <location>
        <begin position="564"/>
        <end position="566"/>
    </location>
</feature>
<feature type="strand" evidence="40">
    <location>
        <begin position="569"/>
        <end position="573"/>
    </location>
</feature>
<feature type="helix" evidence="40">
    <location>
        <begin position="583"/>
        <end position="586"/>
    </location>
</feature>
<feature type="strand" evidence="40">
    <location>
        <begin position="593"/>
        <end position="598"/>
    </location>
</feature>
<feature type="helix" evidence="40">
    <location>
        <begin position="606"/>
        <end position="610"/>
    </location>
</feature>
<feature type="strand" evidence="40">
    <location>
        <begin position="615"/>
        <end position="620"/>
    </location>
</feature>
<feature type="helix" evidence="40">
    <location>
        <begin position="630"/>
        <end position="635"/>
    </location>
</feature>
<feature type="strand" evidence="40">
    <location>
        <begin position="641"/>
        <end position="643"/>
    </location>
</feature>
<feature type="helix" evidence="40">
    <location>
        <begin position="654"/>
        <end position="658"/>
    </location>
</feature>
<feature type="strand" evidence="40">
    <location>
        <begin position="664"/>
        <end position="666"/>
    </location>
</feature>
<feature type="strand" evidence="40">
    <location>
        <begin position="677"/>
        <end position="679"/>
    </location>
</feature>
<feature type="strand" evidence="40">
    <location>
        <begin position="687"/>
        <end position="689"/>
    </location>
</feature>
<feature type="helix" evidence="40">
    <location>
        <begin position="700"/>
        <end position="704"/>
    </location>
</feature>
<feature type="strand" evidence="40">
    <location>
        <begin position="710"/>
        <end position="712"/>
    </location>
</feature>
<feature type="helix" evidence="40">
    <location>
        <begin position="724"/>
        <end position="727"/>
    </location>
</feature>
<feature type="strand" evidence="40">
    <location>
        <begin position="733"/>
        <end position="735"/>
    </location>
</feature>
<feature type="helix" evidence="40">
    <location>
        <begin position="746"/>
        <end position="748"/>
    </location>
</feature>
<feature type="strand" evidence="38">
    <location>
        <begin position="756"/>
        <end position="758"/>
    </location>
</feature>
<feature type="helix" evidence="40">
    <location>
        <begin position="769"/>
        <end position="771"/>
    </location>
</feature>
<feature type="turn" evidence="40">
    <location>
        <begin position="779"/>
        <end position="781"/>
    </location>
</feature>
<feature type="helix" evidence="40">
    <location>
        <begin position="786"/>
        <end position="789"/>
    </location>
</feature>
<feature type="helix" evidence="40">
    <location>
        <begin position="794"/>
        <end position="801"/>
    </location>
</feature>
<keyword id="KW-0002">3D-structure</keyword>
<keyword id="KW-1003">Cell membrane</keyword>
<keyword id="KW-1015">Disulfide bond</keyword>
<keyword id="KW-0256">Endoplasmic reticulum</keyword>
<keyword id="KW-0407">Ion channel</keyword>
<keyword id="KW-0406">Ion transport</keyword>
<keyword id="KW-0433">Leucine-rich repeat</keyword>
<keyword id="KW-0472">Membrane</keyword>
<keyword id="KW-0597">Phosphoprotein</keyword>
<keyword id="KW-1185">Reference proteome</keyword>
<keyword id="KW-0677">Repeat</keyword>
<keyword id="KW-0812">Transmembrane</keyword>
<keyword id="KW-1133">Transmembrane helix</keyword>
<keyword id="KW-0813">Transport</keyword>
<organism>
    <name type="scientific">Mus musculus</name>
    <name type="common">Mouse</name>
    <dbReference type="NCBI Taxonomy" id="10090"/>
    <lineage>
        <taxon>Eukaryota</taxon>
        <taxon>Metazoa</taxon>
        <taxon>Chordata</taxon>
        <taxon>Craniata</taxon>
        <taxon>Vertebrata</taxon>
        <taxon>Euteleostomi</taxon>
        <taxon>Mammalia</taxon>
        <taxon>Eutheria</taxon>
        <taxon>Euarchontoglires</taxon>
        <taxon>Glires</taxon>
        <taxon>Rodentia</taxon>
        <taxon>Myomorpha</taxon>
        <taxon>Muroidea</taxon>
        <taxon>Muridae</taxon>
        <taxon>Murinae</taxon>
        <taxon>Mus</taxon>
        <taxon>Mus</taxon>
    </lineage>
</organism>
<accession>Q8R502</accession>
<accession>Q3TEP9</accession>
<accession>Q8C296</accession>
<accession>Q8R0N7</accession>
<accession>Q8R3G5</accession>
<dbReference type="EMBL" id="AB081508">
    <property type="protein sequence ID" value="BAB86302.1"/>
    <property type="molecule type" value="mRNA"/>
</dbReference>
<dbReference type="EMBL" id="AK169492">
    <property type="protein sequence ID" value="BAE41199.1"/>
    <property type="molecule type" value="mRNA"/>
</dbReference>
<dbReference type="EMBL" id="AK089024">
    <property type="protein sequence ID" value="BAC40706.1"/>
    <property type="molecule type" value="mRNA"/>
</dbReference>
<dbReference type="EMBL" id="AK142337">
    <property type="protein sequence ID" value="BAE25036.1"/>
    <property type="molecule type" value="mRNA"/>
</dbReference>
<dbReference type="EMBL" id="BC025473">
    <property type="protein sequence ID" value="AAH25473.1"/>
    <property type="molecule type" value="mRNA"/>
</dbReference>
<dbReference type="EMBL" id="BC026572">
    <property type="protein sequence ID" value="AAH26572.1"/>
    <property type="molecule type" value="mRNA"/>
</dbReference>
<dbReference type="CCDS" id="CCDS19493.1"/>
<dbReference type="RefSeq" id="NP_598658.1">
    <property type="nucleotide sequence ID" value="NM_133897.2"/>
</dbReference>
<dbReference type="RefSeq" id="XP_006534748.1">
    <property type="nucleotide sequence ID" value="XM_006534685.4"/>
</dbReference>
<dbReference type="RefSeq" id="XP_017176062.1">
    <property type="nucleotide sequence ID" value="XM_017320573.2"/>
</dbReference>
<dbReference type="PDB" id="8B40">
    <property type="method" value="EM"/>
    <property type="resolution" value="4.60 A"/>
    <property type="chains" value="A/B/C/D/E/F/G=2-803"/>
</dbReference>
<dbReference type="PDB" id="8B41">
    <property type="method" value="EM"/>
    <property type="resolution" value="3.80 A"/>
    <property type="chains" value="E/F=2-803"/>
</dbReference>
<dbReference type="PDB" id="8B42">
    <property type="method" value="EM"/>
    <property type="resolution" value="6.60 A"/>
    <property type="chains" value="E/F=2-803"/>
</dbReference>
<dbReference type="PDB" id="8BEN">
    <property type="method" value="X-ray"/>
    <property type="resolution" value="3.10 A"/>
    <property type="chains" value="A/B/C/D=396-803"/>
</dbReference>
<dbReference type="PDB" id="8DR8">
    <property type="method" value="EM"/>
    <property type="resolution" value="3.04 A"/>
    <property type="chains" value="F=1-803"/>
</dbReference>
<dbReference type="PDB" id="8DRA">
    <property type="method" value="EM"/>
    <property type="resolution" value="3.98 A"/>
    <property type="chains" value="F=1-803"/>
</dbReference>
<dbReference type="PDB" id="8DRE">
    <property type="method" value="EM"/>
    <property type="resolution" value="3.18 A"/>
    <property type="chains" value="F=1-803"/>
</dbReference>
<dbReference type="PDB" id="8DRK">
    <property type="method" value="EM"/>
    <property type="resolution" value="2.95 A"/>
    <property type="chains" value="F=1-803"/>
</dbReference>
<dbReference type="PDB" id="8DRN">
    <property type="method" value="EM"/>
    <property type="resolution" value="4.12 A"/>
    <property type="chains" value="F=1-803"/>
</dbReference>
<dbReference type="PDB" id="8DS3">
    <property type="method" value="EM"/>
    <property type="resolution" value="3.07 A"/>
    <property type="chains" value="F=1-803"/>
</dbReference>
<dbReference type="PDB" id="8DS9">
    <property type="method" value="EM"/>
    <property type="resolution" value="3.17 A"/>
    <property type="chains" value="F=1-803"/>
</dbReference>
<dbReference type="PDB" id="8DSA">
    <property type="method" value="EM"/>
    <property type="resolution" value="3.48 A"/>
    <property type="chains" value="F=1-803"/>
</dbReference>
<dbReference type="PDB" id="8F74">
    <property type="method" value="EM"/>
    <property type="resolution" value="3.10 A"/>
    <property type="chains" value="F=1-803"/>
</dbReference>
<dbReference type="PDB" id="8F75">
    <property type="method" value="EM"/>
    <property type="resolution" value="4.00 A"/>
    <property type="chains" value="F=1-803"/>
</dbReference>
<dbReference type="PDB" id="8F77">
    <property type="method" value="EM"/>
    <property type="resolution" value="3.15 A"/>
    <property type="chains" value="F=1-803"/>
</dbReference>
<dbReference type="PDB" id="8F79">
    <property type="method" value="EM"/>
    <property type="resolution" value="3.15 A"/>
    <property type="chains" value="F=1-803"/>
</dbReference>
<dbReference type="PDB" id="8F7B">
    <property type="method" value="EM"/>
    <property type="resolution" value="3.15 A"/>
    <property type="chains" value="F=1-803"/>
</dbReference>
<dbReference type="PDB" id="8F7D">
    <property type="method" value="EM"/>
    <property type="resolution" value="4.20 A"/>
    <property type="chains" value="F=1-803"/>
</dbReference>
<dbReference type="PDBsum" id="8B40"/>
<dbReference type="PDBsum" id="8B41"/>
<dbReference type="PDBsum" id="8B42"/>
<dbReference type="PDBsum" id="8BEN"/>
<dbReference type="PDBsum" id="8DR8"/>
<dbReference type="PDBsum" id="8DRA"/>
<dbReference type="PDBsum" id="8DRE"/>
<dbReference type="PDBsum" id="8DRK"/>
<dbReference type="PDBsum" id="8DRN"/>
<dbReference type="PDBsum" id="8DS3"/>
<dbReference type="PDBsum" id="8DS9"/>
<dbReference type="PDBsum" id="8DSA"/>
<dbReference type="PDBsum" id="8F74"/>
<dbReference type="PDBsum" id="8F75"/>
<dbReference type="PDBsum" id="8F77"/>
<dbReference type="PDBsum" id="8F79"/>
<dbReference type="PDBsum" id="8F7B"/>
<dbReference type="PDBsum" id="8F7D"/>
<dbReference type="EMDB" id="EMD-15835"/>
<dbReference type="EMDB" id="EMD-15836"/>
<dbReference type="EMDB" id="EMD-15837"/>
<dbReference type="EMDB" id="EMD-27674"/>
<dbReference type="EMDB" id="EMD-27675"/>
<dbReference type="EMDB" id="EMD-27676"/>
<dbReference type="EMDB" id="EMD-27677"/>
<dbReference type="EMDB" id="EMD-27678"/>
<dbReference type="EMDB" id="EMD-27682"/>
<dbReference type="EMDB" id="EMD-27686"/>
<dbReference type="EMDB" id="EMD-27687"/>
<dbReference type="EMDB" id="EMD-28894"/>
<dbReference type="EMDB" id="EMD-28895"/>
<dbReference type="EMDB" id="EMD-28897"/>
<dbReference type="EMDB" id="EMD-28898"/>
<dbReference type="EMDB" id="EMD-28901"/>
<dbReference type="EMDB" id="EMD-28903"/>
<dbReference type="SMR" id="Q8R502"/>
<dbReference type="BioGRID" id="221495">
    <property type="interactions" value="3"/>
</dbReference>
<dbReference type="FunCoup" id="Q8R502">
    <property type="interactions" value="684"/>
</dbReference>
<dbReference type="IntAct" id="Q8R502">
    <property type="interactions" value="2"/>
</dbReference>
<dbReference type="MINT" id="Q8R502"/>
<dbReference type="STRING" id="10090.ENSMUSP00000066015"/>
<dbReference type="GlyGen" id="Q8R502">
    <property type="glycosylation" value="6 sites, 4 N-linked glycans (5 sites), 1 O-linked glycan (1 site)"/>
</dbReference>
<dbReference type="iPTMnet" id="Q8R502"/>
<dbReference type="PhosphoSitePlus" id="Q8R502"/>
<dbReference type="SwissPalm" id="Q8R502"/>
<dbReference type="jPOST" id="Q8R502"/>
<dbReference type="PaxDb" id="10090-ENSMUSP00000066015"/>
<dbReference type="PeptideAtlas" id="Q8R502"/>
<dbReference type="ProteomicsDB" id="252515"/>
<dbReference type="Pumba" id="Q8R502"/>
<dbReference type="Antibodypedia" id="33620">
    <property type="antibodies" value="23 antibodies from 14 providers"/>
</dbReference>
<dbReference type="DNASU" id="100604"/>
<dbReference type="Ensembl" id="ENSMUST00000067924.13">
    <property type="protein sequence ID" value="ENSMUSP00000066015.7"/>
    <property type="gene ID" value="ENSMUSG00000054720.13"/>
</dbReference>
<dbReference type="GeneID" id="100604"/>
<dbReference type="KEGG" id="mmu:100604"/>
<dbReference type="UCSC" id="uc008ylf.1">
    <property type="organism name" value="mouse"/>
</dbReference>
<dbReference type="AGR" id="MGI:2140839"/>
<dbReference type="CTD" id="84230"/>
<dbReference type="MGI" id="MGI:2140839">
    <property type="gene designation" value="Lrrc8c"/>
</dbReference>
<dbReference type="VEuPathDB" id="HostDB:ENSMUSG00000054720"/>
<dbReference type="eggNOG" id="KOG0619">
    <property type="taxonomic scope" value="Eukaryota"/>
</dbReference>
<dbReference type="GeneTree" id="ENSGT00940000159250"/>
<dbReference type="HOGENOM" id="CLU_019019_0_0_1"/>
<dbReference type="InParanoid" id="Q8R502"/>
<dbReference type="OMA" id="YNSIMYI"/>
<dbReference type="OrthoDB" id="660555at2759"/>
<dbReference type="PhylomeDB" id="Q8R502"/>
<dbReference type="TreeFam" id="TF331443"/>
<dbReference type="Reactome" id="R-MMU-5223345">
    <property type="pathway name" value="Miscellaneous transport and binding events"/>
</dbReference>
<dbReference type="BioGRID-ORCS" id="100604">
    <property type="hits" value="0 hits in 77 CRISPR screens"/>
</dbReference>
<dbReference type="CD-CODE" id="CE726F99">
    <property type="entry name" value="Postsynaptic density"/>
</dbReference>
<dbReference type="ChiTaRS" id="Lrrc8c">
    <property type="organism name" value="mouse"/>
</dbReference>
<dbReference type="PRO" id="PR:Q8R502"/>
<dbReference type="Proteomes" id="UP000000589">
    <property type="component" value="Chromosome 5"/>
</dbReference>
<dbReference type="RNAct" id="Q8R502">
    <property type="molecule type" value="protein"/>
</dbReference>
<dbReference type="Bgee" id="ENSMUSG00000054720">
    <property type="expression patterns" value="Expressed in left lung lobe and 223 other cell types or tissues"/>
</dbReference>
<dbReference type="ExpressionAtlas" id="Q8R502">
    <property type="expression patterns" value="baseline and differential"/>
</dbReference>
<dbReference type="GO" id="GO:0005783">
    <property type="term" value="C:endoplasmic reticulum"/>
    <property type="evidence" value="ECO:0000314"/>
    <property type="project" value="MGI"/>
</dbReference>
<dbReference type="GO" id="GO:0005789">
    <property type="term" value="C:endoplasmic reticulum membrane"/>
    <property type="evidence" value="ECO:0007669"/>
    <property type="project" value="UniProtKB-SubCell"/>
</dbReference>
<dbReference type="GO" id="GO:0034702">
    <property type="term" value="C:monoatomic ion channel complex"/>
    <property type="evidence" value="ECO:0000315"/>
    <property type="project" value="UniProtKB"/>
</dbReference>
<dbReference type="GO" id="GO:0005886">
    <property type="term" value="C:plasma membrane"/>
    <property type="evidence" value="ECO:0000250"/>
    <property type="project" value="UniProtKB"/>
</dbReference>
<dbReference type="GO" id="GO:0005225">
    <property type="term" value="F:volume-sensitive anion channel activity"/>
    <property type="evidence" value="ECO:0000250"/>
    <property type="project" value="UniProtKB"/>
</dbReference>
<dbReference type="GO" id="GO:0015810">
    <property type="term" value="P:aspartate transmembrane transport"/>
    <property type="evidence" value="ECO:0007669"/>
    <property type="project" value="Ensembl"/>
</dbReference>
<dbReference type="GO" id="GO:0071470">
    <property type="term" value="P:cellular response to osmotic stress"/>
    <property type="evidence" value="ECO:0007669"/>
    <property type="project" value="Ensembl"/>
</dbReference>
<dbReference type="GO" id="GO:0140361">
    <property type="term" value="P:cyclic-GMP-AMP transmembrane import across plasma membrane"/>
    <property type="evidence" value="ECO:0000250"/>
    <property type="project" value="UniProtKB"/>
</dbReference>
<dbReference type="GO" id="GO:0045444">
    <property type="term" value="P:fat cell differentiation"/>
    <property type="evidence" value="ECO:0000314"/>
    <property type="project" value="MGI"/>
</dbReference>
<dbReference type="GO" id="GO:0098656">
    <property type="term" value="P:monoatomic anion transmembrane transport"/>
    <property type="evidence" value="ECO:0000315"/>
    <property type="project" value="UniProtKB"/>
</dbReference>
<dbReference type="GO" id="GO:0034214">
    <property type="term" value="P:protein hexamerization"/>
    <property type="evidence" value="ECO:0000314"/>
    <property type="project" value="UniProtKB"/>
</dbReference>
<dbReference type="GO" id="GO:0015734">
    <property type="term" value="P:taurine transmembrane transport"/>
    <property type="evidence" value="ECO:0007669"/>
    <property type="project" value="Ensembl"/>
</dbReference>
<dbReference type="FunFam" id="3.80.10.10:FF:000156">
    <property type="entry name" value="volume-regulated anion channel subunit LRRC8C isoform X2"/>
    <property type="match status" value="1"/>
</dbReference>
<dbReference type="FunFam" id="3.80.10.10:FF:000182">
    <property type="entry name" value="volume-regulated anion channel subunit LRRC8C isoform X2"/>
    <property type="match status" value="1"/>
</dbReference>
<dbReference type="Gene3D" id="3.80.10.10">
    <property type="entry name" value="Ribonuclease Inhibitor"/>
    <property type="match status" value="2"/>
</dbReference>
<dbReference type="InterPro" id="IPR001611">
    <property type="entry name" value="Leu-rich_rpt"/>
</dbReference>
<dbReference type="InterPro" id="IPR003591">
    <property type="entry name" value="Leu-rich_rpt_typical-subtyp"/>
</dbReference>
<dbReference type="InterPro" id="IPR032675">
    <property type="entry name" value="LRR_dom_sf"/>
</dbReference>
<dbReference type="InterPro" id="IPR050216">
    <property type="entry name" value="LRR_domain-containing"/>
</dbReference>
<dbReference type="InterPro" id="IPR021040">
    <property type="entry name" value="LRRC8_Pannexin-like"/>
</dbReference>
<dbReference type="PANTHER" id="PTHR48051">
    <property type="match status" value="1"/>
</dbReference>
<dbReference type="PANTHER" id="PTHR48051:SF1">
    <property type="entry name" value="RAS SUPPRESSOR PROTEIN 1"/>
    <property type="match status" value="1"/>
</dbReference>
<dbReference type="Pfam" id="PF00560">
    <property type="entry name" value="LRR_1"/>
    <property type="match status" value="1"/>
</dbReference>
<dbReference type="Pfam" id="PF13855">
    <property type="entry name" value="LRR_8"/>
    <property type="match status" value="1"/>
</dbReference>
<dbReference type="Pfam" id="PF12534">
    <property type="entry name" value="Pannexin_like"/>
    <property type="match status" value="1"/>
</dbReference>
<dbReference type="SMART" id="SM00369">
    <property type="entry name" value="LRR_TYP"/>
    <property type="match status" value="7"/>
</dbReference>
<dbReference type="SUPFAM" id="SSF52058">
    <property type="entry name" value="L domain-like"/>
    <property type="match status" value="1"/>
</dbReference>
<dbReference type="PROSITE" id="PS51450">
    <property type="entry name" value="LRR"/>
    <property type="match status" value="9"/>
</dbReference>
<reference key="1">
    <citation type="journal article" date="2004" name="J. Cell Sci.">
        <title>Fad24, a mammalian homolog of Noc3p, is a positive regulator in adipocyte differentiation.</title>
        <authorList>
            <person name="Tominaga K."/>
            <person name="Johmura Y."/>
            <person name="Nishizuka M."/>
            <person name="Imagawa M."/>
        </authorList>
    </citation>
    <scope>NUCLEOTIDE SEQUENCE [MRNA]</scope>
    <scope>FUNCTION</scope>
    <scope>SUBCELLULAR LOCATION</scope>
    <scope>TISSUE SPECIFICITY</scope>
</reference>
<reference key="2">
    <citation type="journal article" date="2005" name="Science">
        <title>The transcriptional landscape of the mammalian genome.</title>
        <authorList>
            <person name="Carninci P."/>
            <person name="Kasukawa T."/>
            <person name="Katayama S."/>
            <person name="Gough J."/>
            <person name="Frith M.C."/>
            <person name="Maeda N."/>
            <person name="Oyama R."/>
            <person name="Ravasi T."/>
            <person name="Lenhard B."/>
            <person name="Wells C."/>
            <person name="Kodzius R."/>
            <person name="Shimokawa K."/>
            <person name="Bajic V.B."/>
            <person name="Brenner S.E."/>
            <person name="Batalov S."/>
            <person name="Forrest A.R."/>
            <person name="Zavolan M."/>
            <person name="Davis M.J."/>
            <person name="Wilming L.G."/>
            <person name="Aidinis V."/>
            <person name="Allen J.E."/>
            <person name="Ambesi-Impiombato A."/>
            <person name="Apweiler R."/>
            <person name="Aturaliya R.N."/>
            <person name="Bailey T.L."/>
            <person name="Bansal M."/>
            <person name="Baxter L."/>
            <person name="Beisel K.W."/>
            <person name="Bersano T."/>
            <person name="Bono H."/>
            <person name="Chalk A.M."/>
            <person name="Chiu K.P."/>
            <person name="Choudhary V."/>
            <person name="Christoffels A."/>
            <person name="Clutterbuck D.R."/>
            <person name="Crowe M.L."/>
            <person name="Dalla E."/>
            <person name="Dalrymple B.P."/>
            <person name="de Bono B."/>
            <person name="Della Gatta G."/>
            <person name="di Bernardo D."/>
            <person name="Down T."/>
            <person name="Engstrom P."/>
            <person name="Fagiolini M."/>
            <person name="Faulkner G."/>
            <person name="Fletcher C.F."/>
            <person name="Fukushima T."/>
            <person name="Furuno M."/>
            <person name="Futaki S."/>
            <person name="Gariboldi M."/>
            <person name="Georgii-Hemming P."/>
            <person name="Gingeras T.R."/>
            <person name="Gojobori T."/>
            <person name="Green R.E."/>
            <person name="Gustincich S."/>
            <person name="Harbers M."/>
            <person name="Hayashi Y."/>
            <person name="Hensch T.K."/>
            <person name="Hirokawa N."/>
            <person name="Hill D."/>
            <person name="Huminiecki L."/>
            <person name="Iacono M."/>
            <person name="Ikeo K."/>
            <person name="Iwama A."/>
            <person name="Ishikawa T."/>
            <person name="Jakt M."/>
            <person name="Kanapin A."/>
            <person name="Katoh M."/>
            <person name="Kawasawa Y."/>
            <person name="Kelso J."/>
            <person name="Kitamura H."/>
            <person name="Kitano H."/>
            <person name="Kollias G."/>
            <person name="Krishnan S.P."/>
            <person name="Kruger A."/>
            <person name="Kummerfeld S.K."/>
            <person name="Kurochkin I.V."/>
            <person name="Lareau L.F."/>
            <person name="Lazarevic D."/>
            <person name="Lipovich L."/>
            <person name="Liu J."/>
            <person name="Liuni S."/>
            <person name="McWilliam S."/>
            <person name="Madan Babu M."/>
            <person name="Madera M."/>
            <person name="Marchionni L."/>
            <person name="Matsuda H."/>
            <person name="Matsuzawa S."/>
            <person name="Miki H."/>
            <person name="Mignone F."/>
            <person name="Miyake S."/>
            <person name="Morris K."/>
            <person name="Mottagui-Tabar S."/>
            <person name="Mulder N."/>
            <person name="Nakano N."/>
            <person name="Nakauchi H."/>
            <person name="Ng P."/>
            <person name="Nilsson R."/>
            <person name="Nishiguchi S."/>
            <person name="Nishikawa S."/>
            <person name="Nori F."/>
            <person name="Ohara O."/>
            <person name="Okazaki Y."/>
            <person name="Orlando V."/>
            <person name="Pang K.C."/>
            <person name="Pavan W.J."/>
            <person name="Pavesi G."/>
            <person name="Pesole G."/>
            <person name="Petrovsky N."/>
            <person name="Piazza S."/>
            <person name="Reed J."/>
            <person name="Reid J.F."/>
            <person name="Ring B.Z."/>
            <person name="Ringwald M."/>
            <person name="Rost B."/>
            <person name="Ruan Y."/>
            <person name="Salzberg S.L."/>
            <person name="Sandelin A."/>
            <person name="Schneider C."/>
            <person name="Schoenbach C."/>
            <person name="Sekiguchi K."/>
            <person name="Semple C.A."/>
            <person name="Seno S."/>
            <person name="Sessa L."/>
            <person name="Sheng Y."/>
            <person name="Shibata Y."/>
            <person name="Shimada H."/>
            <person name="Shimada K."/>
            <person name="Silva D."/>
            <person name="Sinclair B."/>
            <person name="Sperling S."/>
            <person name="Stupka E."/>
            <person name="Sugiura K."/>
            <person name="Sultana R."/>
            <person name="Takenaka Y."/>
            <person name="Taki K."/>
            <person name="Tammoja K."/>
            <person name="Tan S.L."/>
            <person name="Tang S."/>
            <person name="Taylor M.S."/>
            <person name="Tegner J."/>
            <person name="Teichmann S.A."/>
            <person name="Ueda H.R."/>
            <person name="van Nimwegen E."/>
            <person name="Verardo R."/>
            <person name="Wei C.L."/>
            <person name="Yagi K."/>
            <person name="Yamanishi H."/>
            <person name="Zabarovsky E."/>
            <person name="Zhu S."/>
            <person name="Zimmer A."/>
            <person name="Hide W."/>
            <person name="Bult C."/>
            <person name="Grimmond S.M."/>
            <person name="Teasdale R.D."/>
            <person name="Liu E.T."/>
            <person name="Brusic V."/>
            <person name="Quackenbush J."/>
            <person name="Wahlestedt C."/>
            <person name="Mattick J.S."/>
            <person name="Hume D.A."/>
            <person name="Kai C."/>
            <person name="Sasaki D."/>
            <person name="Tomaru Y."/>
            <person name="Fukuda S."/>
            <person name="Kanamori-Katayama M."/>
            <person name="Suzuki M."/>
            <person name="Aoki J."/>
            <person name="Arakawa T."/>
            <person name="Iida J."/>
            <person name="Imamura K."/>
            <person name="Itoh M."/>
            <person name="Kato T."/>
            <person name="Kawaji H."/>
            <person name="Kawagashira N."/>
            <person name="Kawashima T."/>
            <person name="Kojima M."/>
            <person name="Kondo S."/>
            <person name="Konno H."/>
            <person name="Nakano K."/>
            <person name="Ninomiya N."/>
            <person name="Nishio T."/>
            <person name="Okada M."/>
            <person name="Plessy C."/>
            <person name="Shibata K."/>
            <person name="Shiraki T."/>
            <person name="Suzuki S."/>
            <person name="Tagami M."/>
            <person name="Waki K."/>
            <person name="Watahiki A."/>
            <person name="Okamura-Oho Y."/>
            <person name="Suzuki H."/>
            <person name="Kawai J."/>
            <person name="Hayashizaki Y."/>
        </authorList>
    </citation>
    <scope>NUCLEOTIDE SEQUENCE [LARGE SCALE MRNA]</scope>
    <source>
        <strain>NOD</strain>
        <tissue>Thymus</tissue>
    </source>
</reference>
<reference key="3">
    <citation type="journal article" date="2004" name="Genome Res.">
        <title>The status, quality, and expansion of the NIH full-length cDNA project: the Mammalian Gene Collection (MGC).</title>
        <authorList>
            <consortium name="The MGC Project Team"/>
        </authorList>
    </citation>
    <scope>NUCLEOTIDE SEQUENCE [LARGE SCALE MRNA]</scope>
    <source>
        <strain>FVB/N</strain>
        <tissue>Colon</tissue>
        <tissue>Mammary gland</tissue>
    </source>
</reference>
<reference key="4">
    <citation type="journal article" date="2004" name="J. Biol. Chem.">
        <title>The novel gene fad158, having a transmembrane domain and leucine-rich repeat, stimulates adipocyte differentiation.</title>
        <authorList>
            <person name="Tominaga K."/>
            <person name="Kondo C."/>
            <person name="Kagata T."/>
            <person name="Hishida T."/>
            <person name="Nishizuka M."/>
            <person name="Imagawa M."/>
        </authorList>
    </citation>
    <scope>TISSUE SPECIFICITY</scope>
    <scope>INDUCTION</scope>
    <scope>FUNCTION</scope>
    <scope>SUBCELLULAR LOCATION</scope>
</reference>
<reference key="5">
    <citation type="journal article" date="2010" name="Cell">
        <title>A tissue-specific atlas of mouse protein phosphorylation and expression.</title>
        <authorList>
            <person name="Huttlin E.L."/>
            <person name="Jedrychowski M.P."/>
            <person name="Elias J.E."/>
            <person name="Goswami T."/>
            <person name="Rad R."/>
            <person name="Beausoleil S.A."/>
            <person name="Villen J."/>
            <person name="Haas W."/>
            <person name="Sowa M.E."/>
            <person name="Gygi S.P."/>
        </authorList>
    </citation>
    <scope>IDENTIFICATION BY MASS SPECTROMETRY [LARGE SCALE ANALYSIS]</scope>
    <source>
        <tissue>Brain</tissue>
        <tissue>Brown adipose tissue</tissue>
        <tissue>Kidney</tissue>
        <tissue>Lung</tissue>
        <tissue>Spleen</tissue>
    </source>
</reference>
<reference key="6">
    <citation type="journal article" date="2011" name="Biol. Pharm. Bull.">
        <title>Factor for adipocyte differentiation 158 gene disruption prevents the body weight gain and insulin resistance induced by a high-fat diet.</title>
        <authorList>
            <person name="Hayashi T."/>
            <person name="Nozaki Y."/>
            <person name="Nishizuka M."/>
            <person name="Ikawa M."/>
            <person name="Osada S."/>
            <person name="Imagawa M."/>
        </authorList>
    </citation>
    <scope>DISRUPTION PHENOTYPE</scope>
    <scope>FUNCTION</scope>
</reference>
<reference key="7">
    <citation type="journal article" date="2014" name="J. Biol. Chem.">
        <title>The protein synthesis inhibitor blasticidin S enters mammalian cells via leucine-rich repeat-containing protein 8D.</title>
        <authorList>
            <person name="Lee C.C."/>
            <person name="Freinkman E."/>
            <person name="Sabatini D.M."/>
            <person name="Ploegh H.L."/>
        </authorList>
    </citation>
    <scope>SUBUNIT</scope>
    <scope>INTERACTION WITH LRRC8B; LRRC8A AND LRRC8D</scope>
</reference>
<reference key="8">
    <citation type="journal article" date="2018" name="Nature">
        <title>Structure of a volume-regulated anion channel of the LRRC8 family.</title>
        <authorList>
            <person name="Deneka D."/>
            <person name="Sawicka M."/>
            <person name="Lam A.K.M."/>
            <person name="Paulino C."/>
            <person name="Dutzler R."/>
        </authorList>
    </citation>
    <scope>STRUCTURE BY ELECTRON MICROSCOPY (7.94 ANGSTROMS) IN COMPLEX WITH LRRC8A</scope>
    <scope>FUNCTION</scope>
    <scope>SUBUNIT</scope>
    <scope>SUBCELLULAR LOCATION</scope>
    <scope>MUTAGENESIS OF LEU-105</scope>
</reference>
<reference evidence="21 22 23 24" key="9">
    <citation type="journal article" date="2023" name="Nat. Struct. Mol. Biol.">
        <title>Structure of a volume-regulated heteromeric LRRC8A/C channel.</title>
        <authorList>
            <person name="Rutz S."/>
            <person name="Deneka D."/>
            <person name="Dittmann A."/>
            <person name="Sawicka M."/>
            <person name="Dutzler R."/>
        </authorList>
    </citation>
    <scope>X-RAY CRYSTALLOGRAPHY (3.10 ANGSTROMS) OF 396-803</scope>
    <scope>STRUCTURE BY ELECTRON MICROSCOPY (3.80 ANGSTROMS) OF 2-803 IN COMPLEXES WITH LRRC8A AND ANTIBODIES</scope>
    <scope>FUNCTION</scope>
    <scope>TRANSPORTER ACTIVITY</scope>
    <scope>SUBUNIT</scope>
    <scope>TOPOLOGY</scope>
    <scope>DISULFIDE BONDS</scope>
</reference>
<reference evidence="25 26 27 28 29 30 31 32 33 34 35" key="10">
    <citation type="journal article" date="2023" name="Nat. Struct. Mol. Biol.">
        <title>Structural basis for assembly and lipid-mediated gating of LRRC8A:C volume-regulated anion channels.</title>
        <authorList>
            <person name="Kern D.M."/>
            <person name="Bleier J."/>
            <person name="Mukherjee S."/>
            <person name="Hill J.M."/>
            <person name="Kossiakoff A.A."/>
            <person name="Isacoff E.Y."/>
            <person name="Brohawn S.G."/>
        </authorList>
    </citation>
    <scope>STRUCTURE BY ELECTRON MICROSCOPY (2.95 ANGSTROMS)</scope>
    <scope>FUNCTION</scope>
    <scope>CATALYTIC ACTIVITY</scope>
    <scope>SUBUNIT</scope>
    <scope>TOPOLOGY</scope>
    <scope>DISULFIDE BONDS</scope>
</reference>
<name>LRC8C_MOUSE</name>
<evidence type="ECO:0000250" key="1">
    <source>
        <dbReference type="UniProtKB" id="Q498T9"/>
    </source>
</evidence>
<evidence type="ECO:0000250" key="2">
    <source>
        <dbReference type="UniProtKB" id="Q8IWT6"/>
    </source>
</evidence>
<evidence type="ECO:0000250" key="3">
    <source>
        <dbReference type="UniProtKB" id="Q8TDW0"/>
    </source>
</evidence>
<evidence type="ECO:0000255" key="4"/>
<evidence type="ECO:0000256" key="5">
    <source>
        <dbReference type="SAM" id="MobiDB-lite"/>
    </source>
</evidence>
<evidence type="ECO:0000269" key="6">
    <source>
    </source>
</evidence>
<evidence type="ECO:0000269" key="7">
    <source>
    </source>
</evidence>
<evidence type="ECO:0000269" key="8">
    <source>
    </source>
</evidence>
<evidence type="ECO:0000269" key="9">
    <source>
    </source>
</evidence>
<evidence type="ECO:0000269" key="10">
    <source>
    </source>
</evidence>
<evidence type="ECO:0000269" key="11">
    <source>
    </source>
</evidence>
<evidence type="ECO:0000269" key="12">
    <source>
    </source>
</evidence>
<evidence type="ECO:0000303" key="13">
    <source>
    </source>
</evidence>
<evidence type="ECO:0000303" key="14">
    <source>
    </source>
</evidence>
<evidence type="ECO:0000303" key="15">
    <source>
    </source>
</evidence>
<evidence type="ECO:0000303" key="16">
    <source>
    </source>
</evidence>
<evidence type="ECO:0000303" key="17">
    <source>
    </source>
</evidence>
<evidence type="ECO:0000303" key="18">
    <source>
    </source>
</evidence>
<evidence type="ECO:0000305" key="19"/>
<evidence type="ECO:0000312" key="20">
    <source>
        <dbReference type="MGI" id="MGI:2140839"/>
    </source>
</evidence>
<evidence type="ECO:0007744" key="21">
    <source>
        <dbReference type="PDB" id="8B40"/>
    </source>
</evidence>
<evidence type="ECO:0007744" key="22">
    <source>
        <dbReference type="PDB" id="8B41"/>
    </source>
</evidence>
<evidence type="ECO:0007744" key="23">
    <source>
        <dbReference type="PDB" id="8B42"/>
    </source>
</evidence>
<evidence type="ECO:0007744" key="24">
    <source>
        <dbReference type="PDB" id="8BEN"/>
    </source>
</evidence>
<evidence type="ECO:0007744" key="25">
    <source>
        <dbReference type="PDB" id="8DR8"/>
    </source>
</evidence>
<evidence type="ECO:0007744" key="26">
    <source>
        <dbReference type="PDB" id="8DRA"/>
    </source>
</evidence>
<evidence type="ECO:0007744" key="27">
    <source>
        <dbReference type="PDB" id="8DRE"/>
    </source>
</evidence>
<evidence type="ECO:0007744" key="28">
    <source>
        <dbReference type="PDB" id="8DRK"/>
    </source>
</evidence>
<evidence type="ECO:0007744" key="29">
    <source>
        <dbReference type="PDB" id="8DRN"/>
    </source>
</evidence>
<evidence type="ECO:0007744" key="30">
    <source>
        <dbReference type="PDB" id="8DS3"/>
    </source>
</evidence>
<evidence type="ECO:0007744" key="31">
    <source>
        <dbReference type="PDB" id="8DS9"/>
    </source>
</evidence>
<evidence type="ECO:0007744" key="32">
    <source>
        <dbReference type="PDB" id="8DSA"/>
    </source>
</evidence>
<evidence type="ECO:0007744" key="33">
    <source>
        <dbReference type="PDB" id="8F74"/>
    </source>
</evidence>
<evidence type="ECO:0007744" key="34">
    <source>
        <dbReference type="PDB" id="8F75"/>
    </source>
</evidence>
<evidence type="ECO:0007744" key="35">
    <source>
        <dbReference type="PDB" id="8F77"/>
    </source>
</evidence>
<evidence type="ECO:0007744" key="36">
    <source>
        <dbReference type="PDB" id="8F79"/>
    </source>
</evidence>
<evidence type="ECO:0007744" key="37">
    <source>
        <dbReference type="PDB" id="8F7B"/>
    </source>
</evidence>
<evidence type="ECO:0007829" key="38">
    <source>
        <dbReference type="PDB" id="8BEN"/>
    </source>
</evidence>
<evidence type="ECO:0007829" key="39">
    <source>
        <dbReference type="PDB" id="8DRK"/>
    </source>
</evidence>
<evidence type="ECO:0007829" key="40">
    <source>
        <dbReference type="PDB" id="8DS3"/>
    </source>
</evidence>